<reference key="1">
    <citation type="submission" date="2006-10" db="EMBL/GenBank/DDBJ databases">
        <authorList>
            <person name="Fleischmann R.D."/>
            <person name="Dodson R.J."/>
            <person name="Haft D.H."/>
            <person name="Merkel J.S."/>
            <person name="Nelson W.C."/>
            <person name="Fraser C.M."/>
        </authorList>
    </citation>
    <scope>NUCLEOTIDE SEQUENCE [LARGE SCALE GENOMIC DNA]</scope>
    <source>
        <strain>104</strain>
    </source>
</reference>
<protein>
    <recommendedName>
        <fullName evidence="1">Small ribosomal subunit protein uS3</fullName>
    </recommendedName>
    <alternativeName>
        <fullName evidence="3">30S ribosomal protein S3</fullName>
    </alternativeName>
</protein>
<feature type="chain" id="PRO_0000293827" description="Small ribosomal subunit protein uS3">
    <location>
        <begin position="1"/>
        <end position="280"/>
    </location>
</feature>
<feature type="domain" description="KH type-2" evidence="1">
    <location>
        <begin position="38"/>
        <end position="106"/>
    </location>
</feature>
<feature type="region of interest" description="Disordered" evidence="2">
    <location>
        <begin position="215"/>
        <end position="280"/>
    </location>
</feature>
<feature type="compositionally biased region" description="Low complexity" evidence="2">
    <location>
        <begin position="238"/>
        <end position="280"/>
    </location>
</feature>
<accession>A0QL12</accession>
<name>RS3_MYCA1</name>
<evidence type="ECO:0000255" key="1">
    <source>
        <dbReference type="HAMAP-Rule" id="MF_01309"/>
    </source>
</evidence>
<evidence type="ECO:0000256" key="2">
    <source>
        <dbReference type="SAM" id="MobiDB-lite"/>
    </source>
</evidence>
<evidence type="ECO:0000305" key="3"/>
<sequence>MGQKINPHGFRLGITTDWKSRWYADKQYADYVKEDVAIRRLLSTGLERAGIADVEIERTRDRVRVDIHTARPGIVIGRRGTEADRIRADLEKLTGKQVQLNILEVRNPESQAQLVAQGVAEQLSNRVAFRRAMRKAIQSAMRQPNVKGIRVQCSGRLGGAEMSRSEFYREGRVPLHTLRADIDYGLYEAKTTFGRIGVKVWIYKGDVVGGKRELAAAAPAGAERPRRERPSGTRPRRSGASGTTATGTEAGRAAASADESTAAGQPAEAAPAAEPQSTES</sequence>
<proteinExistence type="inferred from homology"/>
<dbReference type="EMBL" id="CP000479">
    <property type="protein sequence ID" value="ABK67409.1"/>
    <property type="molecule type" value="Genomic_DNA"/>
</dbReference>
<dbReference type="RefSeq" id="WP_011726078.1">
    <property type="nucleotide sequence ID" value="NC_008595.1"/>
</dbReference>
<dbReference type="SMR" id="A0QL12"/>
<dbReference type="GeneID" id="75271979"/>
<dbReference type="KEGG" id="mav:MAV_4465"/>
<dbReference type="HOGENOM" id="CLU_058591_0_0_11"/>
<dbReference type="Proteomes" id="UP000001574">
    <property type="component" value="Chromosome"/>
</dbReference>
<dbReference type="GO" id="GO:0022627">
    <property type="term" value="C:cytosolic small ribosomal subunit"/>
    <property type="evidence" value="ECO:0007669"/>
    <property type="project" value="TreeGrafter"/>
</dbReference>
<dbReference type="GO" id="GO:0003729">
    <property type="term" value="F:mRNA binding"/>
    <property type="evidence" value="ECO:0007669"/>
    <property type="project" value="UniProtKB-UniRule"/>
</dbReference>
<dbReference type="GO" id="GO:0019843">
    <property type="term" value="F:rRNA binding"/>
    <property type="evidence" value="ECO:0007669"/>
    <property type="project" value="UniProtKB-UniRule"/>
</dbReference>
<dbReference type="GO" id="GO:0003735">
    <property type="term" value="F:structural constituent of ribosome"/>
    <property type="evidence" value="ECO:0007669"/>
    <property type="project" value="InterPro"/>
</dbReference>
<dbReference type="GO" id="GO:0006412">
    <property type="term" value="P:translation"/>
    <property type="evidence" value="ECO:0007669"/>
    <property type="project" value="UniProtKB-UniRule"/>
</dbReference>
<dbReference type="CDD" id="cd02412">
    <property type="entry name" value="KH-II_30S_S3"/>
    <property type="match status" value="1"/>
</dbReference>
<dbReference type="FunFam" id="3.30.1140.32:FF:000002">
    <property type="entry name" value="30S ribosomal protein S3"/>
    <property type="match status" value="1"/>
</dbReference>
<dbReference type="FunFam" id="3.30.300.20:FF:000001">
    <property type="entry name" value="30S ribosomal protein S3"/>
    <property type="match status" value="1"/>
</dbReference>
<dbReference type="Gene3D" id="3.30.300.20">
    <property type="match status" value="1"/>
</dbReference>
<dbReference type="Gene3D" id="3.30.1140.32">
    <property type="entry name" value="Ribosomal protein S3, C-terminal domain"/>
    <property type="match status" value="1"/>
</dbReference>
<dbReference type="HAMAP" id="MF_01309_B">
    <property type="entry name" value="Ribosomal_uS3_B"/>
    <property type="match status" value="1"/>
</dbReference>
<dbReference type="InterPro" id="IPR004087">
    <property type="entry name" value="KH_dom"/>
</dbReference>
<dbReference type="InterPro" id="IPR015946">
    <property type="entry name" value="KH_dom-like_a/b"/>
</dbReference>
<dbReference type="InterPro" id="IPR004044">
    <property type="entry name" value="KH_dom_type_2"/>
</dbReference>
<dbReference type="InterPro" id="IPR009019">
    <property type="entry name" value="KH_sf_prok-type"/>
</dbReference>
<dbReference type="InterPro" id="IPR036419">
    <property type="entry name" value="Ribosomal_S3_C_sf"/>
</dbReference>
<dbReference type="InterPro" id="IPR005704">
    <property type="entry name" value="Ribosomal_uS3_bac-typ"/>
</dbReference>
<dbReference type="InterPro" id="IPR001351">
    <property type="entry name" value="Ribosomal_uS3_C"/>
</dbReference>
<dbReference type="InterPro" id="IPR018280">
    <property type="entry name" value="Ribosomal_uS3_CS"/>
</dbReference>
<dbReference type="NCBIfam" id="TIGR01009">
    <property type="entry name" value="rpsC_bact"/>
    <property type="match status" value="1"/>
</dbReference>
<dbReference type="PANTHER" id="PTHR11760">
    <property type="entry name" value="30S/40S RIBOSOMAL PROTEIN S3"/>
    <property type="match status" value="1"/>
</dbReference>
<dbReference type="PANTHER" id="PTHR11760:SF19">
    <property type="entry name" value="SMALL RIBOSOMAL SUBUNIT PROTEIN US3C"/>
    <property type="match status" value="1"/>
</dbReference>
<dbReference type="Pfam" id="PF07650">
    <property type="entry name" value="KH_2"/>
    <property type="match status" value="1"/>
</dbReference>
<dbReference type="Pfam" id="PF00189">
    <property type="entry name" value="Ribosomal_S3_C"/>
    <property type="match status" value="1"/>
</dbReference>
<dbReference type="SMART" id="SM00322">
    <property type="entry name" value="KH"/>
    <property type="match status" value="1"/>
</dbReference>
<dbReference type="SUPFAM" id="SSF54814">
    <property type="entry name" value="Prokaryotic type KH domain (KH-domain type II)"/>
    <property type="match status" value="1"/>
</dbReference>
<dbReference type="SUPFAM" id="SSF54821">
    <property type="entry name" value="Ribosomal protein S3 C-terminal domain"/>
    <property type="match status" value="1"/>
</dbReference>
<dbReference type="PROSITE" id="PS50823">
    <property type="entry name" value="KH_TYPE_2"/>
    <property type="match status" value="1"/>
</dbReference>
<dbReference type="PROSITE" id="PS00548">
    <property type="entry name" value="RIBOSOMAL_S3"/>
    <property type="match status" value="1"/>
</dbReference>
<comment type="function">
    <text evidence="1">Binds the lower part of the 30S subunit head. Binds mRNA in the 70S ribosome, positioning it for translation.</text>
</comment>
<comment type="subunit">
    <text evidence="1">Part of the 30S ribosomal subunit. Forms a tight complex with proteins S10 and S14.</text>
</comment>
<comment type="similarity">
    <text evidence="1">Belongs to the universal ribosomal protein uS3 family.</text>
</comment>
<keyword id="KW-0687">Ribonucleoprotein</keyword>
<keyword id="KW-0689">Ribosomal protein</keyword>
<keyword id="KW-0694">RNA-binding</keyword>
<keyword id="KW-0699">rRNA-binding</keyword>
<gene>
    <name evidence="1" type="primary">rpsC</name>
    <name type="ordered locus">MAV_4465</name>
</gene>
<organism>
    <name type="scientific">Mycobacterium avium (strain 104)</name>
    <dbReference type="NCBI Taxonomy" id="243243"/>
    <lineage>
        <taxon>Bacteria</taxon>
        <taxon>Bacillati</taxon>
        <taxon>Actinomycetota</taxon>
        <taxon>Actinomycetes</taxon>
        <taxon>Mycobacteriales</taxon>
        <taxon>Mycobacteriaceae</taxon>
        <taxon>Mycobacterium</taxon>
        <taxon>Mycobacterium avium complex (MAC)</taxon>
    </lineage>
</organism>